<feature type="chain" id="PRO_1000067836" description="Large ribosomal subunit protein bL21">
    <location>
        <begin position="1"/>
        <end position="104"/>
    </location>
</feature>
<evidence type="ECO:0000255" key="1">
    <source>
        <dbReference type="HAMAP-Rule" id="MF_01363"/>
    </source>
</evidence>
<evidence type="ECO:0000305" key="2"/>
<keyword id="KW-0687">Ribonucleoprotein</keyword>
<keyword id="KW-0689">Ribosomal protein</keyword>
<keyword id="KW-0694">RNA-binding</keyword>
<keyword id="KW-0699">rRNA-binding</keyword>
<comment type="function">
    <text evidence="1">This protein binds to 23S rRNA in the presence of protein L20.</text>
</comment>
<comment type="subunit">
    <text evidence="1">Part of the 50S ribosomal subunit. Contacts protein L20.</text>
</comment>
<comment type="similarity">
    <text evidence="1">Belongs to the bacterial ribosomal protein bL21 family.</text>
</comment>
<sequence length="104" mass="11620">MYAIIKNGGKQYKVKEDEVVKLEKFDLGIGEKVEFDTVLMGQTAAGEVKIGAPTVAGAKVVGEVVEQGRHKKVKIMKFRRRKHSMKQQGHRQYFTAVKVSSISL</sequence>
<accession>A4IZ45</accession>
<protein>
    <recommendedName>
        <fullName evidence="1">Large ribosomal subunit protein bL21</fullName>
    </recommendedName>
    <alternativeName>
        <fullName evidence="2">50S ribosomal protein L21</fullName>
    </alternativeName>
</protein>
<dbReference type="EMBL" id="CP000608">
    <property type="protein sequence ID" value="ABO47196.1"/>
    <property type="molecule type" value="Genomic_DNA"/>
</dbReference>
<dbReference type="RefSeq" id="WP_003020642.1">
    <property type="nucleotide sequence ID" value="NC_009257.1"/>
</dbReference>
<dbReference type="SMR" id="A4IZ45"/>
<dbReference type="KEGG" id="ftw:FTW_1466"/>
<dbReference type="HOGENOM" id="CLU_061463_3_2_6"/>
<dbReference type="GO" id="GO:0005737">
    <property type="term" value="C:cytoplasm"/>
    <property type="evidence" value="ECO:0007669"/>
    <property type="project" value="UniProtKB-ARBA"/>
</dbReference>
<dbReference type="GO" id="GO:1990904">
    <property type="term" value="C:ribonucleoprotein complex"/>
    <property type="evidence" value="ECO:0007669"/>
    <property type="project" value="UniProtKB-KW"/>
</dbReference>
<dbReference type="GO" id="GO:0005840">
    <property type="term" value="C:ribosome"/>
    <property type="evidence" value="ECO:0007669"/>
    <property type="project" value="UniProtKB-KW"/>
</dbReference>
<dbReference type="GO" id="GO:0019843">
    <property type="term" value="F:rRNA binding"/>
    <property type="evidence" value="ECO:0007669"/>
    <property type="project" value="UniProtKB-UniRule"/>
</dbReference>
<dbReference type="GO" id="GO:0003735">
    <property type="term" value="F:structural constituent of ribosome"/>
    <property type="evidence" value="ECO:0007669"/>
    <property type="project" value="InterPro"/>
</dbReference>
<dbReference type="GO" id="GO:0006412">
    <property type="term" value="P:translation"/>
    <property type="evidence" value="ECO:0007669"/>
    <property type="project" value="UniProtKB-UniRule"/>
</dbReference>
<dbReference type="HAMAP" id="MF_01363">
    <property type="entry name" value="Ribosomal_bL21"/>
    <property type="match status" value="1"/>
</dbReference>
<dbReference type="InterPro" id="IPR028909">
    <property type="entry name" value="bL21-like"/>
</dbReference>
<dbReference type="InterPro" id="IPR036164">
    <property type="entry name" value="bL21-like_sf"/>
</dbReference>
<dbReference type="InterPro" id="IPR001787">
    <property type="entry name" value="Ribosomal_bL21"/>
</dbReference>
<dbReference type="InterPro" id="IPR018258">
    <property type="entry name" value="Ribosomal_bL21_CS"/>
</dbReference>
<dbReference type="NCBIfam" id="TIGR00061">
    <property type="entry name" value="L21"/>
    <property type="match status" value="1"/>
</dbReference>
<dbReference type="PANTHER" id="PTHR21349">
    <property type="entry name" value="50S RIBOSOMAL PROTEIN L21"/>
    <property type="match status" value="1"/>
</dbReference>
<dbReference type="PANTHER" id="PTHR21349:SF0">
    <property type="entry name" value="LARGE RIBOSOMAL SUBUNIT PROTEIN BL21M"/>
    <property type="match status" value="1"/>
</dbReference>
<dbReference type="Pfam" id="PF00829">
    <property type="entry name" value="Ribosomal_L21p"/>
    <property type="match status" value="1"/>
</dbReference>
<dbReference type="SUPFAM" id="SSF141091">
    <property type="entry name" value="L21p-like"/>
    <property type="match status" value="1"/>
</dbReference>
<dbReference type="PROSITE" id="PS01169">
    <property type="entry name" value="RIBOSOMAL_L21"/>
    <property type="match status" value="1"/>
</dbReference>
<proteinExistence type="inferred from homology"/>
<gene>
    <name evidence="1" type="primary">rplU</name>
    <name type="ordered locus">FTW_1466</name>
</gene>
<reference key="1">
    <citation type="journal article" date="2007" name="PLoS ONE">
        <title>Complete genomic characterization of a pathogenic A.II strain of Francisella tularensis subspecies tularensis.</title>
        <authorList>
            <person name="Beckstrom-Sternberg S.M."/>
            <person name="Auerbach R.K."/>
            <person name="Godbole S."/>
            <person name="Pearson J.V."/>
            <person name="Beckstrom-Sternberg J.S."/>
            <person name="Deng Z."/>
            <person name="Munk C."/>
            <person name="Kubota K."/>
            <person name="Zhou Y."/>
            <person name="Bruce D."/>
            <person name="Noronha J."/>
            <person name="Scheuermann R.H."/>
            <person name="Wang A."/>
            <person name="Wei X."/>
            <person name="Wang J."/>
            <person name="Hao J."/>
            <person name="Wagner D.M."/>
            <person name="Brettin T.S."/>
            <person name="Brown N."/>
            <person name="Gilna P."/>
            <person name="Keim P.S."/>
        </authorList>
    </citation>
    <scope>NUCLEOTIDE SEQUENCE [LARGE SCALE GENOMIC DNA]</scope>
    <source>
        <strain>WY96-3418</strain>
    </source>
</reference>
<name>RL21_FRATW</name>
<organism>
    <name type="scientific">Francisella tularensis subsp. tularensis (strain WY96-3418)</name>
    <dbReference type="NCBI Taxonomy" id="418136"/>
    <lineage>
        <taxon>Bacteria</taxon>
        <taxon>Pseudomonadati</taxon>
        <taxon>Pseudomonadota</taxon>
        <taxon>Gammaproteobacteria</taxon>
        <taxon>Thiotrichales</taxon>
        <taxon>Francisellaceae</taxon>
        <taxon>Francisella</taxon>
    </lineage>
</organism>